<accession>Q10VU5</accession>
<reference key="1">
    <citation type="journal article" date="2015" name="Proc. Natl. Acad. Sci. U.S.A.">
        <title>Trichodesmium genome maintains abundant, widespread noncoding DNA in situ, despite oligotrophic lifestyle.</title>
        <authorList>
            <person name="Walworth N."/>
            <person name="Pfreundt U."/>
            <person name="Nelson W.C."/>
            <person name="Mincer T."/>
            <person name="Heidelberg J.F."/>
            <person name="Fu F."/>
            <person name="Waterbury J.B."/>
            <person name="Glavina del Rio T."/>
            <person name="Goodwin L."/>
            <person name="Kyrpides N.C."/>
            <person name="Land M.L."/>
            <person name="Woyke T."/>
            <person name="Hutchins D.A."/>
            <person name="Hess W.R."/>
            <person name="Webb E.A."/>
        </authorList>
    </citation>
    <scope>NUCLEOTIDE SEQUENCE [LARGE SCALE GENOMIC DNA]</scope>
    <source>
        <strain>IMS101</strain>
    </source>
</reference>
<keyword id="KW-0067">ATP-binding</keyword>
<keyword id="KW-0963">Cytoplasm</keyword>
<keyword id="KW-0460">Magnesium</keyword>
<keyword id="KW-0479">Metal-binding</keyword>
<keyword id="KW-0547">Nucleotide-binding</keyword>
<keyword id="KW-0554">One-carbon metabolism</keyword>
<keyword id="KW-0630">Potassium</keyword>
<keyword id="KW-0808">Transferase</keyword>
<sequence length="420" mass="45818">MSSRYLFTSESVTEGHPDKICDQISDTIIDAILAQDPQSRVAAEVVVNTGLVLITGEITTKAQVNYIELARKKIADIGYVHAENGFSADSCSVLVALDEQSADIAQGVDKAQETRELLSEEELDAVGAGDQGLMFGFACNETPELMPLPISLAHRVCRQLTAVRKTGQLPYLRPDGKSQVTITYEDGRPVGIDTILISTQHTAKIGEITELSDIQAKIKEDLWKYVVEPIFKDAEIKPNSQTRFLVNPTGKFVIGGPQGDCGLTGRKIIIDTYGGYSRHGGGAFSGKDPTKVDRSAAYACRYIAKNIVAADLAEKCEVQISYAIGVAKPVSMMIETFGTSKVDEDKLLEVVKENFELRPAGIIQNFNLRNLPGERGGRFYQDVAAYGHLGRTDLDLPWEQTDKVELLKQAFSPQLLATAS</sequence>
<dbReference type="EC" id="2.5.1.6" evidence="1"/>
<dbReference type="EMBL" id="CP000393">
    <property type="protein sequence ID" value="ABG53629.1"/>
    <property type="molecule type" value="Genomic_DNA"/>
</dbReference>
<dbReference type="RefSeq" id="WP_011613946.1">
    <property type="nucleotide sequence ID" value="NC_008312.1"/>
</dbReference>
<dbReference type="SMR" id="Q10VU5"/>
<dbReference type="STRING" id="203124.Tery_4661"/>
<dbReference type="KEGG" id="ter:Tery_4661"/>
<dbReference type="eggNOG" id="COG0192">
    <property type="taxonomic scope" value="Bacteria"/>
</dbReference>
<dbReference type="HOGENOM" id="CLU_041802_1_1_3"/>
<dbReference type="OrthoDB" id="9801686at2"/>
<dbReference type="UniPathway" id="UPA00315">
    <property type="reaction ID" value="UER00080"/>
</dbReference>
<dbReference type="GO" id="GO:0005737">
    <property type="term" value="C:cytoplasm"/>
    <property type="evidence" value="ECO:0007669"/>
    <property type="project" value="UniProtKB-SubCell"/>
</dbReference>
<dbReference type="GO" id="GO:0005524">
    <property type="term" value="F:ATP binding"/>
    <property type="evidence" value="ECO:0007669"/>
    <property type="project" value="UniProtKB-UniRule"/>
</dbReference>
<dbReference type="GO" id="GO:0000287">
    <property type="term" value="F:magnesium ion binding"/>
    <property type="evidence" value="ECO:0007669"/>
    <property type="project" value="UniProtKB-UniRule"/>
</dbReference>
<dbReference type="GO" id="GO:0004478">
    <property type="term" value="F:methionine adenosyltransferase activity"/>
    <property type="evidence" value="ECO:0007669"/>
    <property type="project" value="UniProtKB-UniRule"/>
</dbReference>
<dbReference type="GO" id="GO:0006730">
    <property type="term" value="P:one-carbon metabolic process"/>
    <property type="evidence" value="ECO:0007669"/>
    <property type="project" value="UniProtKB-KW"/>
</dbReference>
<dbReference type="GO" id="GO:0006556">
    <property type="term" value="P:S-adenosylmethionine biosynthetic process"/>
    <property type="evidence" value="ECO:0007669"/>
    <property type="project" value="UniProtKB-UniRule"/>
</dbReference>
<dbReference type="CDD" id="cd18079">
    <property type="entry name" value="S-AdoMet_synt"/>
    <property type="match status" value="1"/>
</dbReference>
<dbReference type="FunFam" id="3.30.300.10:FF:000003">
    <property type="entry name" value="S-adenosylmethionine synthase"/>
    <property type="match status" value="1"/>
</dbReference>
<dbReference type="Gene3D" id="3.30.300.10">
    <property type="match status" value="3"/>
</dbReference>
<dbReference type="HAMAP" id="MF_00086">
    <property type="entry name" value="S_AdoMet_synth1"/>
    <property type="match status" value="1"/>
</dbReference>
<dbReference type="InterPro" id="IPR022631">
    <property type="entry name" value="ADOMET_SYNTHASE_CS"/>
</dbReference>
<dbReference type="InterPro" id="IPR022630">
    <property type="entry name" value="S-AdoMet_synt_C"/>
</dbReference>
<dbReference type="InterPro" id="IPR022629">
    <property type="entry name" value="S-AdoMet_synt_central"/>
</dbReference>
<dbReference type="InterPro" id="IPR022628">
    <property type="entry name" value="S-AdoMet_synt_N"/>
</dbReference>
<dbReference type="InterPro" id="IPR002133">
    <property type="entry name" value="S-AdoMet_synthetase"/>
</dbReference>
<dbReference type="InterPro" id="IPR022636">
    <property type="entry name" value="S-AdoMet_synthetase_sfam"/>
</dbReference>
<dbReference type="NCBIfam" id="TIGR01034">
    <property type="entry name" value="metK"/>
    <property type="match status" value="1"/>
</dbReference>
<dbReference type="PANTHER" id="PTHR11964">
    <property type="entry name" value="S-ADENOSYLMETHIONINE SYNTHETASE"/>
    <property type="match status" value="1"/>
</dbReference>
<dbReference type="Pfam" id="PF02773">
    <property type="entry name" value="S-AdoMet_synt_C"/>
    <property type="match status" value="1"/>
</dbReference>
<dbReference type="Pfam" id="PF02772">
    <property type="entry name" value="S-AdoMet_synt_M"/>
    <property type="match status" value="1"/>
</dbReference>
<dbReference type="Pfam" id="PF00438">
    <property type="entry name" value="S-AdoMet_synt_N"/>
    <property type="match status" value="1"/>
</dbReference>
<dbReference type="PIRSF" id="PIRSF000497">
    <property type="entry name" value="MAT"/>
    <property type="match status" value="1"/>
</dbReference>
<dbReference type="SUPFAM" id="SSF55973">
    <property type="entry name" value="S-adenosylmethionine synthetase"/>
    <property type="match status" value="3"/>
</dbReference>
<dbReference type="PROSITE" id="PS00376">
    <property type="entry name" value="ADOMET_SYNTHASE_1"/>
    <property type="match status" value="1"/>
</dbReference>
<dbReference type="PROSITE" id="PS00377">
    <property type="entry name" value="ADOMET_SYNTHASE_2"/>
    <property type="match status" value="1"/>
</dbReference>
<protein>
    <recommendedName>
        <fullName evidence="1">S-adenosylmethionine synthase</fullName>
        <shortName evidence="1">AdoMet synthase</shortName>
        <ecNumber evidence="1">2.5.1.6</ecNumber>
    </recommendedName>
    <alternativeName>
        <fullName evidence="1">MAT</fullName>
    </alternativeName>
    <alternativeName>
        <fullName evidence="1">Methionine adenosyltransferase</fullName>
    </alternativeName>
</protein>
<gene>
    <name evidence="1" type="primary">metK</name>
    <name type="ordered locus">Tery_4661</name>
</gene>
<comment type="function">
    <text evidence="1">Catalyzes the formation of S-adenosylmethionine (AdoMet) from methionine and ATP. The overall synthetic reaction is composed of two sequential steps, AdoMet formation and the subsequent tripolyphosphate hydrolysis which occurs prior to release of AdoMet from the enzyme.</text>
</comment>
<comment type="catalytic activity">
    <reaction evidence="1">
        <text>L-methionine + ATP + H2O = S-adenosyl-L-methionine + phosphate + diphosphate</text>
        <dbReference type="Rhea" id="RHEA:21080"/>
        <dbReference type="ChEBI" id="CHEBI:15377"/>
        <dbReference type="ChEBI" id="CHEBI:30616"/>
        <dbReference type="ChEBI" id="CHEBI:33019"/>
        <dbReference type="ChEBI" id="CHEBI:43474"/>
        <dbReference type="ChEBI" id="CHEBI:57844"/>
        <dbReference type="ChEBI" id="CHEBI:59789"/>
        <dbReference type="EC" id="2.5.1.6"/>
    </reaction>
</comment>
<comment type="cofactor">
    <cofactor evidence="1">
        <name>Mg(2+)</name>
        <dbReference type="ChEBI" id="CHEBI:18420"/>
    </cofactor>
    <text evidence="1">Binds 2 divalent ions per subunit.</text>
</comment>
<comment type="cofactor">
    <cofactor evidence="1">
        <name>K(+)</name>
        <dbReference type="ChEBI" id="CHEBI:29103"/>
    </cofactor>
    <text evidence="1">Binds 1 potassium ion per subunit.</text>
</comment>
<comment type="pathway">
    <text evidence="1">Amino-acid biosynthesis; S-adenosyl-L-methionine biosynthesis; S-adenosyl-L-methionine from L-methionine: step 1/1.</text>
</comment>
<comment type="subunit">
    <text evidence="1">Homotetramer; dimer of dimers.</text>
</comment>
<comment type="subcellular location">
    <subcellularLocation>
        <location evidence="1">Cytoplasm</location>
    </subcellularLocation>
</comment>
<comment type="similarity">
    <text evidence="1">Belongs to the AdoMet synthase family.</text>
</comment>
<organism>
    <name type="scientific">Trichodesmium erythraeum (strain IMS101)</name>
    <dbReference type="NCBI Taxonomy" id="203124"/>
    <lineage>
        <taxon>Bacteria</taxon>
        <taxon>Bacillati</taxon>
        <taxon>Cyanobacteriota</taxon>
        <taxon>Cyanophyceae</taxon>
        <taxon>Oscillatoriophycideae</taxon>
        <taxon>Oscillatoriales</taxon>
        <taxon>Microcoleaceae</taxon>
        <taxon>Trichodesmium</taxon>
    </lineage>
</organism>
<feature type="chain" id="PRO_0000302999" description="S-adenosylmethionine synthase">
    <location>
        <begin position="1"/>
        <end position="420"/>
    </location>
</feature>
<feature type="region of interest" description="Flexible loop" evidence="1">
    <location>
        <begin position="100"/>
        <end position="110"/>
    </location>
</feature>
<feature type="binding site" description="in other chain" evidence="1">
    <location>
        <position position="16"/>
    </location>
    <ligand>
        <name>ATP</name>
        <dbReference type="ChEBI" id="CHEBI:30616"/>
        <note>ligand shared between two neighboring subunits</note>
    </ligand>
</feature>
<feature type="binding site" evidence="1">
    <location>
        <position position="18"/>
    </location>
    <ligand>
        <name>Mg(2+)</name>
        <dbReference type="ChEBI" id="CHEBI:18420"/>
    </ligand>
</feature>
<feature type="binding site" evidence="1">
    <location>
        <position position="44"/>
    </location>
    <ligand>
        <name>K(+)</name>
        <dbReference type="ChEBI" id="CHEBI:29103"/>
    </ligand>
</feature>
<feature type="binding site" description="in other chain" evidence="1">
    <location>
        <position position="57"/>
    </location>
    <ligand>
        <name>L-methionine</name>
        <dbReference type="ChEBI" id="CHEBI:57844"/>
        <note>ligand shared between two neighboring subunits</note>
    </ligand>
</feature>
<feature type="binding site" description="in other chain" evidence="1">
    <location>
        <position position="100"/>
    </location>
    <ligand>
        <name>L-methionine</name>
        <dbReference type="ChEBI" id="CHEBI:57844"/>
        <note>ligand shared between two neighboring subunits</note>
    </ligand>
</feature>
<feature type="binding site" description="in other chain" evidence="1">
    <location>
        <begin position="175"/>
        <end position="177"/>
    </location>
    <ligand>
        <name>ATP</name>
        <dbReference type="ChEBI" id="CHEBI:30616"/>
        <note>ligand shared between two neighboring subunits</note>
    </ligand>
</feature>
<feature type="binding site" description="in other chain" evidence="1">
    <location>
        <begin position="251"/>
        <end position="252"/>
    </location>
    <ligand>
        <name>ATP</name>
        <dbReference type="ChEBI" id="CHEBI:30616"/>
        <note>ligand shared between two neighboring subunits</note>
    </ligand>
</feature>
<feature type="binding site" evidence="1">
    <location>
        <position position="260"/>
    </location>
    <ligand>
        <name>ATP</name>
        <dbReference type="ChEBI" id="CHEBI:30616"/>
        <note>ligand shared between two neighboring subunits</note>
    </ligand>
</feature>
<feature type="binding site" evidence="1">
    <location>
        <position position="260"/>
    </location>
    <ligand>
        <name>L-methionine</name>
        <dbReference type="ChEBI" id="CHEBI:57844"/>
        <note>ligand shared between two neighboring subunits</note>
    </ligand>
</feature>
<feature type="binding site" description="in other chain" evidence="1">
    <location>
        <begin position="266"/>
        <end position="267"/>
    </location>
    <ligand>
        <name>ATP</name>
        <dbReference type="ChEBI" id="CHEBI:30616"/>
        <note>ligand shared between two neighboring subunits</note>
    </ligand>
</feature>
<feature type="binding site" evidence="1">
    <location>
        <position position="283"/>
    </location>
    <ligand>
        <name>ATP</name>
        <dbReference type="ChEBI" id="CHEBI:30616"/>
        <note>ligand shared between two neighboring subunits</note>
    </ligand>
</feature>
<feature type="binding site" evidence="1">
    <location>
        <position position="287"/>
    </location>
    <ligand>
        <name>ATP</name>
        <dbReference type="ChEBI" id="CHEBI:30616"/>
        <note>ligand shared between two neighboring subunits</note>
    </ligand>
</feature>
<feature type="binding site" description="in other chain" evidence="1">
    <location>
        <position position="291"/>
    </location>
    <ligand>
        <name>L-methionine</name>
        <dbReference type="ChEBI" id="CHEBI:57844"/>
        <note>ligand shared between two neighboring subunits</note>
    </ligand>
</feature>
<name>METK_TRIEI</name>
<proteinExistence type="inferred from homology"/>
<evidence type="ECO:0000255" key="1">
    <source>
        <dbReference type="HAMAP-Rule" id="MF_00086"/>
    </source>
</evidence>